<protein>
    <recommendedName>
        <fullName evidence="1">Large ribosomal subunit protein eL39</fullName>
    </recommendedName>
    <alternativeName>
        <fullName>60S ribosomal protein L39</fullName>
    </alternativeName>
</protein>
<evidence type="ECO:0000305" key="1"/>
<organism>
    <name type="scientific">Plutella xylostella</name>
    <name type="common">Diamondback moth</name>
    <name type="synonym">Plutella maculipennis</name>
    <dbReference type="NCBI Taxonomy" id="51655"/>
    <lineage>
        <taxon>Eukaryota</taxon>
        <taxon>Metazoa</taxon>
        <taxon>Ecdysozoa</taxon>
        <taxon>Arthropoda</taxon>
        <taxon>Hexapoda</taxon>
        <taxon>Insecta</taxon>
        <taxon>Pterygota</taxon>
        <taxon>Neoptera</taxon>
        <taxon>Endopterygota</taxon>
        <taxon>Lepidoptera</taxon>
        <taxon>Glossata</taxon>
        <taxon>Ditrysia</taxon>
        <taxon>Yponomeutoidea</taxon>
        <taxon>Plutellidae</taxon>
        <taxon>Plutella</taxon>
    </lineage>
</organism>
<comment type="similarity">
    <text evidence="1">Belongs to the eukaryotic ribosomal protein eL39 family.</text>
</comment>
<keyword id="KW-0687">Ribonucleoprotein</keyword>
<keyword id="KW-0689">Ribosomal protein</keyword>
<proteinExistence type="inferred from homology"/>
<gene>
    <name type="primary">RpL39</name>
</gene>
<accession>Q6F482</accession>
<feature type="chain" id="PRO_0000127032" description="Large ribosomal subunit protein eL39">
    <location>
        <begin position="1"/>
        <end position="51"/>
    </location>
</feature>
<reference key="1">
    <citation type="submission" date="2004-07" db="EMBL/GenBank/DDBJ databases">
        <title>Construction and EST analysis of full-length cDNA libraries from immunized diamond back moth, Plutella xylostella.</title>
        <authorList>
            <person name="Eum J.H."/>
            <person name="Yoe S.M."/>
            <person name="Seo Y.R."/>
            <person name="Kang S.W."/>
            <person name="Han S.S."/>
        </authorList>
    </citation>
    <scope>NUCLEOTIDE SEQUENCE [LARGE SCALE MRNA]</scope>
</reference>
<sequence>MSAHKTFIIKRKLAKKLKQNRPIPQWVRMRTGNTIRYNAKRRHWRRTKLKL</sequence>
<dbReference type="EMBL" id="AB180408">
    <property type="protein sequence ID" value="BAD26652.1"/>
    <property type="molecule type" value="mRNA"/>
</dbReference>
<dbReference type="SMR" id="Q6F482"/>
<dbReference type="OrthoDB" id="6332053at2759"/>
<dbReference type="GO" id="GO:0022625">
    <property type="term" value="C:cytosolic large ribosomal subunit"/>
    <property type="evidence" value="ECO:0007669"/>
    <property type="project" value="TreeGrafter"/>
</dbReference>
<dbReference type="GO" id="GO:0003735">
    <property type="term" value="F:structural constituent of ribosome"/>
    <property type="evidence" value="ECO:0007669"/>
    <property type="project" value="InterPro"/>
</dbReference>
<dbReference type="GO" id="GO:0006412">
    <property type="term" value="P:translation"/>
    <property type="evidence" value="ECO:0007669"/>
    <property type="project" value="InterPro"/>
</dbReference>
<dbReference type="FunFam" id="1.10.1620.10:FF:000001">
    <property type="entry name" value="60S ribosomal protein-like L39"/>
    <property type="match status" value="1"/>
</dbReference>
<dbReference type="Gene3D" id="1.10.1620.10">
    <property type="entry name" value="Ribosomal protein L39e"/>
    <property type="match status" value="1"/>
</dbReference>
<dbReference type="HAMAP" id="MF_00629">
    <property type="entry name" value="Ribosomal_eL39"/>
    <property type="match status" value="1"/>
</dbReference>
<dbReference type="InterPro" id="IPR000077">
    <property type="entry name" value="Ribosomal_eL39"/>
</dbReference>
<dbReference type="InterPro" id="IPR020083">
    <property type="entry name" value="Ribosomal_eL39_CS"/>
</dbReference>
<dbReference type="InterPro" id="IPR023626">
    <property type="entry name" value="Ribosomal_eL39_dom_sf"/>
</dbReference>
<dbReference type="PANTHER" id="PTHR19970:SF0">
    <property type="entry name" value="LARGE RIBOSOMAL SUBUNIT PROTEIN EL39"/>
    <property type="match status" value="1"/>
</dbReference>
<dbReference type="PANTHER" id="PTHR19970">
    <property type="entry name" value="RIBOSOMAL PROTEIN L39E"/>
    <property type="match status" value="1"/>
</dbReference>
<dbReference type="Pfam" id="PF00832">
    <property type="entry name" value="Ribosomal_L39"/>
    <property type="match status" value="1"/>
</dbReference>
<dbReference type="SUPFAM" id="SSF48662">
    <property type="entry name" value="Ribosomal protein L39e"/>
    <property type="match status" value="1"/>
</dbReference>
<dbReference type="PROSITE" id="PS00051">
    <property type="entry name" value="RIBOSOMAL_L39E"/>
    <property type="match status" value="1"/>
</dbReference>
<name>RL39_PLUXY</name>